<name>RHAD_ECO8A</name>
<dbReference type="EC" id="4.1.2.19" evidence="1"/>
<dbReference type="EMBL" id="CU928160">
    <property type="protein sequence ID" value="CAR00878.1"/>
    <property type="molecule type" value="Genomic_DNA"/>
</dbReference>
<dbReference type="RefSeq" id="WP_001179764.1">
    <property type="nucleotide sequence ID" value="NC_011741.1"/>
</dbReference>
<dbReference type="SMR" id="B7M6V4"/>
<dbReference type="GeneID" id="75204576"/>
<dbReference type="KEGG" id="ecr:ECIAI1_4107"/>
<dbReference type="HOGENOM" id="CLU_076831_0_0_6"/>
<dbReference type="UniPathway" id="UPA00541">
    <property type="reaction ID" value="UER00603"/>
</dbReference>
<dbReference type="GO" id="GO:0005829">
    <property type="term" value="C:cytosol"/>
    <property type="evidence" value="ECO:0007669"/>
    <property type="project" value="TreeGrafter"/>
</dbReference>
<dbReference type="GO" id="GO:0046872">
    <property type="term" value="F:metal ion binding"/>
    <property type="evidence" value="ECO:0007669"/>
    <property type="project" value="UniProtKB-KW"/>
</dbReference>
<dbReference type="GO" id="GO:0008994">
    <property type="term" value="F:rhamnulose-1-phosphate aldolase activity"/>
    <property type="evidence" value="ECO:0007669"/>
    <property type="project" value="UniProtKB-UniRule"/>
</dbReference>
<dbReference type="GO" id="GO:0019323">
    <property type="term" value="P:pentose catabolic process"/>
    <property type="evidence" value="ECO:0007669"/>
    <property type="project" value="TreeGrafter"/>
</dbReference>
<dbReference type="GO" id="GO:0019301">
    <property type="term" value="P:rhamnose catabolic process"/>
    <property type="evidence" value="ECO:0007669"/>
    <property type="project" value="UniProtKB-UniRule"/>
</dbReference>
<dbReference type="CDD" id="cd00398">
    <property type="entry name" value="Aldolase_II"/>
    <property type="match status" value="1"/>
</dbReference>
<dbReference type="FunFam" id="3.40.225.10:FF:000006">
    <property type="entry name" value="Rhamnulose-1-phosphate aldolase"/>
    <property type="match status" value="1"/>
</dbReference>
<dbReference type="Gene3D" id="3.40.225.10">
    <property type="entry name" value="Class II aldolase/adducin N-terminal domain"/>
    <property type="match status" value="1"/>
</dbReference>
<dbReference type="HAMAP" id="MF_00770">
    <property type="entry name" value="RhaD"/>
    <property type="match status" value="1"/>
</dbReference>
<dbReference type="InterPro" id="IPR050197">
    <property type="entry name" value="Aldolase_class_II_sugar_metab"/>
</dbReference>
<dbReference type="InterPro" id="IPR001303">
    <property type="entry name" value="Aldolase_II/adducin_N"/>
</dbReference>
<dbReference type="InterPro" id="IPR036409">
    <property type="entry name" value="Aldolase_II/adducin_N_sf"/>
</dbReference>
<dbReference type="InterPro" id="IPR013447">
    <property type="entry name" value="Rhamnulose-1-P_Aldolase"/>
</dbReference>
<dbReference type="NCBIfam" id="NF002963">
    <property type="entry name" value="PRK03634.1"/>
    <property type="match status" value="1"/>
</dbReference>
<dbReference type="NCBIfam" id="TIGR02624">
    <property type="entry name" value="rhamnu_1P_ald"/>
    <property type="match status" value="1"/>
</dbReference>
<dbReference type="PANTHER" id="PTHR22789">
    <property type="entry name" value="FUCULOSE PHOSPHATE ALDOLASE"/>
    <property type="match status" value="1"/>
</dbReference>
<dbReference type="PANTHER" id="PTHR22789:SF16">
    <property type="entry name" value="RHAMNULOSE-1-PHOSPHATE ALDOLASE"/>
    <property type="match status" value="1"/>
</dbReference>
<dbReference type="Pfam" id="PF00596">
    <property type="entry name" value="Aldolase_II"/>
    <property type="match status" value="1"/>
</dbReference>
<dbReference type="SMART" id="SM01007">
    <property type="entry name" value="Aldolase_II"/>
    <property type="match status" value="1"/>
</dbReference>
<dbReference type="SUPFAM" id="SSF53639">
    <property type="entry name" value="AraD/HMP-PK domain-like"/>
    <property type="match status" value="1"/>
</dbReference>
<organism>
    <name type="scientific">Escherichia coli O8 (strain IAI1)</name>
    <dbReference type="NCBI Taxonomy" id="585034"/>
    <lineage>
        <taxon>Bacteria</taxon>
        <taxon>Pseudomonadati</taxon>
        <taxon>Pseudomonadota</taxon>
        <taxon>Gammaproteobacteria</taxon>
        <taxon>Enterobacterales</taxon>
        <taxon>Enterobacteriaceae</taxon>
        <taxon>Escherichia</taxon>
    </lineage>
</organism>
<protein>
    <recommendedName>
        <fullName evidence="1">Rhamnulose-1-phosphate aldolase</fullName>
        <ecNumber evidence="1">4.1.2.19</ecNumber>
    </recommendedName>
</protein>
<gene>
    <name evidence="1" type="primary">rhaD</name>
    <name type="ordered locus">ECIAI1_4107</name>
</gene>
<sequence>MQNITQSWFVQGMIKATTDAWLKGWDERNGGNLTLRLDDADIAPYKDNFHAQPRYIPLSQPMPLLANTPFIVTGSGKFFRNVQLDPAANLGVVKVDSDGAGYHILWGLTNEAVPTSELPAHFLSHCERIKATNGKDRVIMHCHATNLIALTYVLENDTAVFTRQLWEGSTECLVVFPDGVGILPWMVPGTDEIGQATAQEMQKHSLVLWPFHGVFGSGSTLDETFGLIDTAEKSAQVLVKVYSMGGMKQTISREELIALGKRFGVTPLASALAL</sequence>
<accession>B7M6V4</accession>
<keyword id="KW-0963">Cytoplasm</keyword>
<keyword id="KW-0456">Lyase</keyword>
<keyword id="KW-0479">Metal-binding</keyword>
<keyword id="KW-0684">Rhamnose metabolism</keyword>
<keyword id="KW-0862">Zinc</keyword>
<comment type="function">
    <text evidence="1">Catalyzes the reversible cleavage of L-rhamnulose-1-phosphate to dihydroxyacetone phosphate (DHAP) and L-lactaldehyde.</text>
</comment>
<comment type="catalytic activity">
    <reaction evidence="1">
        <text>L-rhamnulose 1-phosphate = (S)-lactaldehyde + dihydroxyacetone phosphate</text>
        <dbReference type="Rhea" id="RHEA:19689"/>
        <dbReference type="ChEBI" id="CHEBI:18041"/>
        <dbReference type="ChEBI" id="CHEBI:57642"/>
        <dbReference type="ChEBI" id="CHEBI:58313"/>
        <dbReference type="EC" id="4.1.2.19"/>
    </reaction>
</comment>
<comment type="cofactor">
    <cofactor evidence="1">
        <name>Zn(2+)</name>
        <dbReference type="ChEBI" id="CHEBI:29105"/>
    </cofactor>
    <text evidence="1">Binds 1 zinc ion per subunit.</text>
</comment>
<comment type="pathway">
    <text evidence="1">Carbohydrate degradation; L-rhamnose degradation; glycerone phosphate from L-rhamnose: step 3/3.</text>
</comment>
<comment type="subunit">
    <text evidence="1">Homotetramer.</text>
</comment>
<comment type="subcellular location">
    <subcellularLocation>
        <location evidence="1">Cytoplasm</location>
    </subcellularLocation>
</comment>
<comment type="similarity">
    <text evidence="1">Belongs to the aldolase class II family. RhaD subfamily.</text>
</comment>
<feature type="chain" id="PRO_1000193728" description="Rhamnulose-1-phosphate aldolase">
    <location>
        <begin position="1"/>
        <end position="274"/>
    </location>
</feature>
<feature type="active site" evidence="1">
    <location>
        <position position="117"/>
    </location>
</feature>
<feature type="binding site" evidence="1">
    <location>
        <position position="141"/>
    </location>
    <ligand>
        <name>Zn(2+)</name>
        <dbReference type="ChEBI" id="CHEBI:29105"/>
    </ligand>
</feature>
<feature type="binding site" evidence="1">
    <location>
        <position position="143"/>
    </location>
    <ligand>
        <name>Zn(2+)</name>
        <dbReference type="ChEBI" id="CHEBI:29105"/>
    </ligand>
</feature>
<feature type="binding site" evidence="1">
    <location>
        <position position="212"/>
    </location>
    <ligand>
        <name>Zn(2+)</name>
        <dbReference type="ChEBI" id="CHEBI:29105"/>
    </ligand>
</feature>
<evidence type="ECO:0000255" key="1">
    <source>
        <dbReference type="HAMAP-Rule" id="MF_00770"/>
    </source>
</evidence>
<reference key="1">
    <citation type="journal article" date="2009" name="PLoS Genet.">
        <title>Organised genome dynamics in the Escherichia coli species results in highly diverse adaptive paths.</title>
        <authorList>
            <person name="Touchon M."/>
            <person name="Hoede C."/>
            <person name="Tenaillon O."/>
            <person name="Barbe V."/>
            <person name="Baeriswyl S."/>
            <person name="Bidet P."/>
            <person name="Bingen E."/>
            <person name="Bonacorsi S."/>
            <person name="Bouchier C."/>
            <person name="Bouvet O."/>
            <person name="Calteau A."/>
            <person name="Chiapello H."/>
            <person name="Clermont O."/>
            <person name="Cruveiller S."/>
            <person name="Danchin A."/>
            <person name="Diard M."/>
            <person name="Dossat C."/>
            <person name="Karoui M.E."/>
            <person name="Frapy E."/>
            <person name="Garry L."/>
            <person name="Ghigo J.M."/>
            <person name="Gilles A.M."/>
            <person name="Johnson J."/>
            <person name="Le Bouguenec C."/>
            <person name="Lescat M."/>
            <person name="Mangenot S."/>
            <person name="Martinez-Jehanne V."/>
            <person name="Matic I."/>
            <person name="Nassif X."/>
            <person name="Oztas S."/>
            <person name="Petit M.A."/>
            <person name="Pichon C."/>
            <person name="Rouy Z."/>
            <person name="Ruf C.S."/>
            <person name="Schneider D."/>
            <person name="Tourret J."/>
            <person name="Vacherie B."/>
            <person name="Vallenet D."/>
            <person name="Medigue C."/>
            <person name="Rocha E.P.C."/>
            <person name="Denamur E."/>
        </authorList>
    </citation>
    <scope>NUCLEOTIDE SEQUENCE [LARGE SCALE GENOMIC DNA]</scope>
    <source>
        <strain>IAI1</strain>
    </source>
</reference>
<proteinExistence type="inferred from homology"/>